<protein>
    <recommendedName>
        <fullName evidence="1">Photosystem II protein D1</fullName>
        <shortName evidence="1">PSII D1 protein</shortName>
        <ecNumber evidence="1">1.10.3.9</ecNumber>
    </recommendedName>
    <alternativeName>
        <fullName evidence="1">Photosystem II Q(B) protein</fullName>
    </alternativeName>
</protein>
<sequence length="353" mass="38864">MTAILERREATSRWAQFCNWITSTENRLYIGWFGVIMIPCLLTATSVFIIAFIAAPPVDIDGIREPVSGSLLYGNNIISGAVIPTSNAIGLHFYPIWEAASLDEWLYNGGPYQLIVCHFLLGVACYMGREWELSFRLGMRPWIAVAYSAPVAAATAVFLIYPIGQGSFSDGMPLGISGTFNFMIVFQAEHNILMHPFHMLGVAGVFGGSLFSAMHGSLVTSSLIRETTENESANAGYKFGQEEETYNIVAAHGYFGRLIFQYASFNNSRSLHFFLAAWPVVGIWFTALGLSTMAFNLNGLNFNQSVVDSQGRVINTWADIINRANLGMEVMHERNAHNFPLDLASVEAPSVNA</sequence>
<comment type="function">
    <text evidence="1">Photosystem II (PSII) is a light-driven water:plastoquinone oxidoreductase that uses light energy to abstract electrons from H(2)O, generating O(2) and a proton gradient subsequently used for ATP formation. It consists of a core antenna complex that captures photons, and an electron transfer chain that converts photonic excitation into a charge separation. The D1/D2 (PsbA/PsbD) reaction center heterodimer binds P680, the primary electron donor of PSII as well as several subsequent electron acceptors.</text>
</comment>
<comment type="catalytic activity">
    <reaction evidence="1">
        <text>2 a plastoquinone + 4 hnu + 2 H2O = 2 a plastoquinol + O2</text>
        <dbReference type="Rhea" id="RHEA:36359"/>
        <dbReference type="Rhea" id="RHEA-COMP:9561"/>
        <dbReference type="Rhea" id="RHEA-COMP:9562"/>
        <dbReference type="ChEBI" id="CHEBI:15377"/>
        <dbReference type="ChEBI" id="CHEBI:15379"/>
        <dbReference type="ChEBI" id="CHEBI:17757"/>
        <dbReference type="ChEBI" id="CHEBI:30212"/>
        <dbReference type="ChEBI" id="CHEBI:62192"/>
        <dbReference type="EC" id="1.10.3.9"/>
    </reaction>
</comment>
<comment type="cofactor">
    <text evidence="1">The D1/D2 heterodimer binds P680, chlorophylls that are the primary electron donor of PSII, and subsequent electron acceptors. It shares a non-heme iron and each subunit binds pheophytin, quinone, additional chlorophylls, carotenoids and lipids. D1 provides most of the ligands for the Mn4-Ca-O5 cluster of the oxygen-evolving complex (OEC). There is also a Cl(-1) ion associated with D1 and D2, which is required for oxygen evolution. The PSII complex binds additional chlorophylls, carotenoids and specific lipids.</text>
</comment>
<comment type="subunit">
    <text evidence="1">PSII is composed of 1 copy each of membrane proteins PsbA, PsbB, PsbC, PsbD, PsbE, PsbF, PsbH, PsbI, PsbJ, PsbK, PsbL, PsbM, PsbT, PsbX, PsbY, PsbZ, Psb30/Ycf12, at least 3 peripheral proteins of the oxygen-evolving complex and a large number of cofactors. It forms dimeric complexes.</text>
</comment>
<comment type="subcellular location">
    <subcellularLocation>
        <location evidence="1">Plastid</location>
        <location evidence="1">Chloroplast thylakoid membrane</location>
        <topology evidence="1">Multi-pass membrane protein</topology>
    </subcellularLocation>
</comment>
<comment type="PTM">
    <text evidence="1">Tyr-161 forms a radical intermediate that is referred to as redox-active TyrZ, YZ or Y-Z.</text>
</comment>
<comment type="PTM">
    <text evidence="1">C-terminally processed by CTPA; processing is essential to allow assembly of the oxygen-evolving complex and thus photosynthetic growth.</text>
</comment>
<comment type="miscellaneous">
    <text evidence="1">2 of the reaction center chlorophylls (ChlD1 and ChlD2) are entirely coordinated by water.</text>
</comment>
<comment type="miscellaneous">
    <text evidence="1">Herbicides such as atrazine, BNT, diuron or ioxynil bind in the Q(B) binding site and block subsequent electron transfer.</text>
</comment>
<comment type="similarity">
    <text evidence="1">Belongs to the reaction center PufL/M/PsbA/D family.</text>
</comment>
<name>PSBA_OLTVI</name>
<feature type="initiator methionine" description="Removed" evidence="1">
    <location>
        <position position="1"/>
    </location>
</feature>
<feature type="chain" id="PRO_0000340042" description="Photosystem II protein D1" evidence="1">
    <location>
        <begin position="2"/>
        <end position="344"/>
    </location>
</feature>
<feature type="propeptide" id="PRO_0000340043" evidence="1">
    <location>
        <begin position="345"/>
        <end position="353"/>
    </location>
</feature>
<feature type="transmembrane region" description="Helical" evidence="1">
    <location>
        <begin position="29"/>
        <end position="46"/>
    </location>
</feature>
<feature type="transmembrane region" description="Helical" evidence="1">
    <location>
        <begin position="118"/>
        <end position="133"/>
    </location>
</feature>
<feature type="transmembrane region" description="Helical" evidence="1">
    <location>
        <begin position="142"/>
        <end position="156"/>
    </location>
</feature>
<feature type="transmembrane region" description="Helical" evidence="1">
    <location>
        <begin position="197"/>
        <end position="218"/>
    </location>
</feature>
<feature type="transmembrane region" description="Helical" evidence="1">
    <location>
        <begin position="274"/>
        <end position="288"/>
    </location>
</feature>
<feature type="binding site" description="axial binding residue" evidence="1">
    <location>
        <position position="118"/>
    </location>
    <ligand>
        <name>chlorophyll a</name>
        <dbReference type="ChEBI" id="CHEBI:58416"/>
        <label>ChlzD1</label>
    </ligand>
    <ligandPart>
        <name>Mg</name>
        <dbReference type="ChEBI" id="CHEBI:25107"/>
    </ligandPart>
</feature>
<feature type="binding site" evidence="1">
    <location>
        <position position="126"/>
    </location>
    <ligand>
        <name>pheophytin a</name>
        <dbReference type="ChEBI" id="CHEBI:136840"/>
        <label>D1</label>
    </ligand>
</feature>
<feature type="binding site" evidence="1">
    <location>
        <position position="170"/>
    </location>
    <ligand>
        <name>[CaMn4O5] cluster</name>
        <dbReference type="ChEBI" id="CHEBI:189552"/>
    </ligand>
</feature>
<feature type="binding site" evidence="1">
    <location>
        <position position="189"/>
    </location>
    <ligand>
        <name>[CaMn4O5] cluster</name>
        <dbReference type="ChEBI" id="CHEBI:189552"/>
    </ligand>
</feature>
<feature type="binding site" description="axial binding residue" evidence="1">
    <location>
        <position position="198"/>
    </location>
    <ligand>
        <name>chlorophyll a</name>
        <dbReference type="ChEBI" id="CHEBI:58416"/>
        <label>PD1</label>
    </ligand>
    <ligandPart>
        <name>Mg</name>
        <dbReference type="ChEBI" id="CHEBI:25107"/>
    </ligandPart>
</feature>
<feature type="binding site" evidence="1">
    <location>
        <position position="215"/>
    </location>
    <ligand>
        <name>a quinone</name>
        <dbReference type="ChEBI" id="CHEBI:132124"/>
        <label>B</label>
    </ligand>
</feature>
<feature type="binding site" evidence="1">
    <location>
        <position position="215"/>
    </location>
    <ligand>
        <name>Fe cation</name>
        <dbReference type="ChEBI" id="CHEBI:24875"/>
        <note>ligand shared with heterodimeric partner</note>
    </ligand>
</feature>
<feature type="binding site" evidence="1">
    <location>
        <begin position="264"/>
        <end position="265"/>
    </location>
    <ligand>
        <name>a quinone</name>
        <dbReference type="ChEBI" id="CHEBI:132124"/>
        <label>B</label>
    </ligand>
</feature>
<feature type="binding site" evidence="1">
    <location>
        <position position="272"/>
    </location>
    <ligand>
        <name>Fe cation</name>
        <dbReference type="ChEBI" id="CHEBI:24875"/>
        <note>ligand shared with heterodimeric partner</note>
    </ligand>
</feature>
<feature type="binding site" evidence="1">
    <location>
        <position position="332"/>
    </location>
    <ligand>
        <name>[CaMn4O5] cluster</name>
        <dbReference type="ChEBI" id="CHEBI:189552"/>
    </ligand>
</feature>
<feature type="binding site" evidence="1">
    <location>
        <position position="333"/>
    </location>
    <ligand>
        <name>[CaMn4O5] cluster</name>
        <dbReference type="ChEBI" id="CHEBI:189552"/>
    </ligand>
</feature>
<feature type="binding site" evidence="1">
    <location>
        <position position="342"/>
    </location>
    <ligand>
        <name>[CaMn4O5] cluster</name>
        <dbReference type="ChEBI" id="CHEBI:189552"/>
    </ligand>
</feature>
<feature type="binding site" evidence="1">
    <location>
        <position position="344"/>
    </location>
    <ligand>
        <name>[CaMn4O5] cluster</name>
        <dbReference type="ChEBI" id="CHEBI:189552"/>
    </ligand>
</feature>
<feature type="site" description="Tyrosine radical intermediate" evidence="1">
    <location>
        <position position="161"/>
    </location>
</feature>
<feature type="site" description="Stabilizes free radical intermediate" evidence="1">
    <location>
        <position position="190"/>
    </location>
</feature>
<feature type="site" description="Cleavage; by CTPA" evidence="1">
    <location>
        <begin position="344"/>
        <end position="345"/>
    </location>
</feature>
<feature type="modified residue" description="N-acetylthreonine" evidence="1">
    <location>
        <position position="2"/>
    </location>
</feature>
<feature type="modified residue" description="Phosphothreonine" evidence="1">
    <location>
        <position position="2"/>
    </location>
</feature>
<organism>
    <name type="scientific">Oltmannsiellopsis viridis</name>
    <name type="common">Marine flagellate</name>
    <name type="synonym">Oltmannsiella viridis</name>
    <dbReference type="NCBI Taxonomy" id="51324"/>
    <lineage>
        <taxon>Eukaryota</taxon>
        <taxon>Viridiplantae</taxon>
        <taxon>Chlorophyta</taxon>
        <taxon>Ulvophyceae</taxon>
        <taxon>Oltmannsiellopsidales</taxon>
        <taxon>Oltmannsiellopsidaceae</taxon>
        <taxon>Oltmannsiellopsis</taxon>
    </lineage>
</organism>
<gene>
    <name evidence="1" type="primary">psbA</name>
</gene>
<proteinExistence type="inferred from homology"/>
<evidence type="ECO:0000255" key="1">
    <source>
        <dbReference type="HAMAP-Rule" id="MF_01379"/>
    </source>
</evidence>
<reference key="1">
    <citation type="journal article" date="2006" name="BMC Biol.">
        <title>The complete chloroplast DNA sequence of the green alga Oltmannsiellopsis viridis reveals a distinctive quadripartite architecture in the chloroplast genome of early diverging ulvophytes.</title>
        <authorList>
            <person name="Pombert J.-F."/>
            <person name="Lemieux C."/>
            <person name="Turmel M."/>
        </authorList>
    </citation>
    <scope>NUCLEOTIDE SEQUENCE [LARGE SCALE GENOMIC DNA]</scope>
</reference>
<geneLocation type="chloroplast"/>
<dbReference type="EC" id="1.10.3.9" evidence="1"/>
<dbReference type="EMBL" id="DQ291132">
    <property type="protein sequence ID" value="ABB81981.1"/>
    <property type="molecule type" value="Genomic_DNA"/>
</dbReference>
<dbReference type="EMBL" id="DQ291132">
    <property type="protein sequence ID" value="ABB82009.1"/>
    <property type="molecule type" value="Genomic_DNA"/>
</dbReference>
<dbReference type="RefSeq" id="YP_635848.1">
    <property type="nucleotide sequence ID" value="NC_008099.1"/>
</dbReference>
<dbReference type="RefSeq" id="YP_635913.1">
    <property type="nucleotide sequence ID" value="NC_008099.1"/>
</dbReference>
<dbReference type="SMR" id="Q20ET2"/>
<dbReference type="GeneID" id="4100131"/>
<dbReference type="GeneID" id="4100187"/>
<dbReference type="GO" id="GO:0009535">
    <property type="term" value="C:chloroplast thylakoid membrane"/>
    <property type="evidence" value="ECO:0007669"/>
    <property type="project" value="UniProtKB-SubCell"/>
</dbReference>
<dbReference type="GO" id="GO:0009523">
    <property type="term" value="C:photosystem II"/>
    <property type="evidence" value="ECO:0007669"/>
    <property type="project" value="UniProtKB-KW"/>
</dbReference>
<dbReference type="GO" id="GO:0016168">
    <property type="term" value="F:chlorophyll binding"/>
    <property type="evidence" value="ECO:0007669"/>
    <property type="project" value="UniProtKB-UniRule"/>
</dbReference>
<dbReference type="GO" id="GO:0045156">
    <property type="term" value="F:electron transporter, transferring electrons within the cyclic electron transport pathway of photosynthesis activity"/>
    <property type="evidence" value="ECO:0007669"/>
    <property type="project" value="InterPro"/>
</dbReference>
<dbReference type="GO" id="GO:0005506">
    <property type="term" value="F:iron ion binding"/>
    <property type="evidence" value="ECO:0007669"/>
    <property type="project" value="UniProtKB-UniRule"/>
</dbReference>
<dbReference type="GO" id="GO:0016682">
    <property type="term" value="F:oxidoreductase activity, acting on diphenols and related substances as donors, oxygen as acceptor"/>
    <property type="evidence" value="ECO:0007669"/>
    <property type="project" value="UniProtKB-UniRule"/>
</dbReference>
<dbReference type="GO" id="GO:0010242">
    <property type="term" value="F:oxygen evolving activity"/>
    <property type="evidence" value="ECO:0007669"/>
    <property type="project" value="UniProtKB-EC"/>
</dbReference>
<dbReference type="GO" id="GO:0009772">
    <property type="term" value="P:photosynthetic electron transport in photosystem II"/>
    <property type="evidence" value="ECO:0007669"/>
    <property type="project" value="InterPro"/>
</dbReference>
<dbReference type="GO" id="GO:0009635">
    <property type="term" value="P:response to herbicide"/>
    <property type="evidence" value="ECO:0007669"/>
    <property type="project" value="UniProtKB-KW"/>
</dbReference>
<dbReference type="CDD" id="cd09289">
    <property type="entry name" value="Photosystem-II_D1"/>
    <property type="match status" value="1"/>
</dbReference>
<dbReference type="FunFam" id="1.20.85.10:FF:000002">
    <property type="entry name" value="Photosystem II protein D1"/>
    <property type="match status" value="1"/>
</dbReference>
<dbReference type="Gene3D" id="1.20.85.10">
    <property type="entry name" value="Photosystem II protein D1-like"/>
    <property type="match status" value="1"/>
</dbReference>
<dbReference type="HAMAP" id="MF_01379">
    <property type="entry name" value="PSII_PsbA_D1"/>
    <property type="match status" value="1"/>
</dbReference>
<dbReference type="InterPro" id="IPR055266">
    <property type="entry name" value="D1/D2"/>
</dbReference>
<dbReference type="InterPro" id="IPR036854">
    <property type="entry name" value="Photo_II_D1/D2_sf"/>
</dbReference>
<dbReference type="InterPro" id="IPR000484">
    <property type="entry name" value="Photo_RC_L/M"/>
</dbReference>
<dbReference type="InterPro" id="IPR055265">
    <property type="entry name" value="Photo_RC_L/M_CS"/>
</dbReference>
<dbReference type="InterPro" id="IPR005867">
    <property type="entry name" value="PSII_D1"/>
</dbReference>
<dbReference type="NCBIfam" id="TIGR01151">
    <property type="entry name" value="psbA"/>
    <property type="match status" value="1"/>
</dbReference>
<dbReference type="PANTHER" id="PTHR33149:SF12">
    <property type="entry name" value="PHOTOSYSTEM II D2 PROTEIN"/>
    <property type="match status" value="1"/>
</dbReference>
<dbReference type="PANTHER" id="PTHR33149">
    <property type="entry name" value="PHOTOSYSTEM II PROTEIN D1"/>
    <property type="match status" value="1"/>
</dbReference>
<dbReference type="Pfam" id="PF00124">
    <property type="entry name" value="Photo_RC"/>
    <property type="match status" value="1"/>
</dbReference>
<dbReference type="PRINTS" id="PR00256">
    <property type="entry name" value="REACTNCENTRE"/>
</dbReference>
<dbReference type="SUPFAM" id="SSF81483">
    <property type="entry name" value="Bacterial photosystem II reaction centre, L and M subunits"/>
    <property type="match status" value="1"/>
</dbReference>
<dbReference type="PROSITE" id="PS00244">
    <property type="entry name" value="REACTION_CENTER"/>
    <property type="match status" value="1"/>
</dbReference>
<accession>Q20ET2</accession>
<keyword id="KW-0007">Acetylation</keyword>
<keyword id="KW-0106">Calcium</keyword>
<keyword id="KW-0148">Chlorophyll</keyword>
<keyword id="KW-0150">Chloroplast</keyword>
<keyword id="KW-0157">Chromophore</keyword>
<keyword id="KW-0249">Electron transport</keyword>
<keyword id="KW-0359">Herbicide resistance</keyword>
<keyword id="KW-0408">Iron</keyword>
<keyword id="KW-0460">Magnesium</keyword>
<keyword id="KW-0464">Manganese</keyword>
<keyword id="KW-0472">Membrane</keyword>
<keyword id="KW-0479">Metal-binding</keyword>
<keyword id="KW-0560">Oxidoreductase</keyword>
<keyword id="KW-0597">Phosphoprotein</keyword>
<keyword id="KW-0602">Photosynthesis</keyword>
<keyword id="KW-0604">Photosystem II</keyword>
<keyword id="KW-0934">Plastid</keyword>
<keyword id="KW-0793">Thylakoid</keyword>
<keyword id="KW-0812">Transmembrane</keyword>
<keyword id="KW-1133">Transmembrane helix</keyword>
<keyword id="KW-0813">Transport</keyword>